<reference key="1">
    <citation type="journal article" date="2009" name="Stand. Genomic Sci.">
        <title>Complete genome sequence of Methanoculleus marisnigri Romesser et al. 1981 type strain JR1.</title>
        <authorList>
            <person name="Anderson I.J."/>
            <person name="Sieprawska-Lupa M."/>
            <person name="Lapidus A."/>
            <person name="Nolan M."/>
            <person name="Copeland A."/>
            <person name="Glavina Del Rio T."/>
            <person name="Tice H."/>
            <person name="Dalin E."/>
            <person name="Barry K."/>
            <person name="Saunders E."/>
            <person name="Han C."/>
            <person name="Brettin T."/>
            <person name="Detter J.C."/>
            <person name="Bruce D."/>
            <person name="Mikhailova N."/>
            <person name="Pitluck S."/>
            <person name="Hauser L."/>
            <person name="Land M."/>
            <person name="Lucas S."/>
            <person name="Richardson P."/>
            <person name="Whitman W.B."/>
            <person name="Kyrpides N.C."/>
        </authorList>
    </citation>
    <scope>NUCLEOTIDE SEQUENCE [LARGE SCALE GENOMIC DNA]</scope>
    <source>
        <strain>ATCC 35101 / DSM 1498 / JR1</strain>
    </source>
</reference>
<protein>
    <recommendedName>
        <fullName evidence="1">7,8-didemethyl-8-hydroxy-5-deazariboflavin synthase</fullName>
        <ecNumber evidence="1">4.3.1.32</ecNumber>
    </recommendedName>
    <alternativeName>
        <fullName evidence="1">FO synthase subunit 1</fullName>
    </alternativeName>
</protein>
<accession>A3CWL4</accession>
<proteinExistence type="inferred from homology"/>
<name>COFG_METMJ</name>
<sequence>MHRRVITFSKNAFLPLTTVCQNRCGYCCFRTPVREGCVMAPTEAIRTLEASAALGCTEALFTFGERPGAVPGFNEMLGRLGYADILDYVYHLSLAAIERDLLPHTNAGILTYAELDRLREVNASMGLMLETTADVPAHRNSPGKDPAVRIEMIENAGKLSIPFTTGILLGIGETEDDREESLRVIADLHRRYGHIQEVIVQNFCPKPGTAMEGAAVPGPDEIGAAISLAREILPADVAVQIPPNLADASRLIGCGVNDLGGVSPLTIDYVNPEHPWPQLDELRRIAGDAELRERLCIYPQYIEKGRYSPLLEPLIRRLAERIAAPGRDAGA</sequence>
<evidence type="ECO:0000255" key="1">
    <source>
        <dbReference type="HAMAP-Rule" id="MF_01611"/>
    </source>
</evidence>
<evidence type="ECO:0000255" key="2">
    <source>
        <dbReference type="PROSITE-ProRule" id="PRU01266"/>
    </source>
</evidence>
<comment type="function">
    <text evidence="1">Catalyzes the radical-mediated synthesis of 7,8-didemethyl-8-hydroxy-5-deazariboflavin from 5-amino-5-(4-hydroxybenzyl)-6-(D-ribitylimino)-5,6-dihydrouracil.</text>
</comment>
<comment type="catalytic activity">
    <reaction evidence="1">
        <text>5-amino-5-(4-hydroxybenzyl)-6-(D-ribitylimino)-5,6-dihydrouracil + S-adenosyl-L-methionine = 7,8-didemethyl-8-hydroxy-5-deazariboflavin + 5'-deoxyadenosine + L-methionine + NH4(+) + H(+)</text>
        <dbReference type="Rhea" id="RHEA:55204"/>
        <dbReference type="ChEBI" id="CHEBI:15378"/>
        <dbReference type="ChEBI" id="CHEBI:17319"/>
        <dbReference type="ChEBI" id="CHEBI:28938"/>
        <dbReference type="ChEBI" id="CHEBI:57844"/>
        <dbReference type="ChEBI" id="CHEBI:59789"/>
        <dbReference type="ChEBI" id="CHEBI:59904"/>
        <dbReference type="ChEBI" id="CHEBI:85936"/>
        <dbReference type="EC" id="4.3.1.32"/>
    </reaction>
</comment>
<comment type="cofactor">
    <cofactor evidence="1">
        <name>[4Fe-4S] cluster</name>
        <dbReference type="ChEBI" id="CHEBI:49883"/>
    </cofactor>
    <text evidence="1">Binds 1 [4Fe-4S] cluster. The cluster is coordinated with 3 cysteines and an exchangeable S-adenosyl-L-methionine.</text>
</comment>
<comment type="pathway">
    <text evidence="1">Cofactor biosynthesis; coenzyme F0 biosynthesis.</text>
</comment>
<comment type="subunit">
    <text evidence="1">Consists of two subunits, CofG and CofH.</text>
</comment>
<comment type="similarity">
    <text evidence="1">Belongs to the radical SAM superfamily. CofG family.</text>
</comment>
<feature type="chain" id="PRO_0000291713" description="7,8-didemethyl-8-hydroxy-5-deazariboflavin synthase">
    <location>
        <begin position="1"/>
        <end position="331"/>
    </location>
</feature>
<feature type="domain" description="Radical SAM core" evidence="2">
    <location>
        <begin position="6"/>
        <end position="244"/>
    </location>
</feature>
<feature type="binding site" evidence="1">
    <location>
        <position position="20"/>
    </location>
    <ligand>
        <name>[4Fe-4S] cluster</name>
        <dbReference type="ChEBI" id="CHEBI:49883"/>
        <note>4Fe-4S-S-AdoMet</note>
    </ligand>
</feature>
<feature type="binding site" evidence="1">
    <location>
        <position position="24"/>
    </location>
    <ligand>
        <name>[4Fe-4S] cluster</name>
        <dbReference type="ChEBI" id="CHEBI:49883"/>
        <note>4Fe-4S-S-AdoMet</note>
    </ligand>
</feature>
<feature type="binding site" evidence="1">
    <location>
        <position position="27"/>
    </location>
    <ligand>
        <name>[4Fe-4S] cluster</name>
        <dbReference type="ChEBI" id="CHEBI:49883"/>
        <note>4Fe-4S-S-AdoMet</note>
    </ligand>
</feature>
<keyword id="KW-0004">4Fe-4S</keyword>
<keyword id="KW-0408">Iron</keyword>
<keyword id="KW-0411">Iron-sulfur</keyword>
<keyword id="KW-0456">Lyase</keyword>
<keyword id="KW-0479">Metal-binding</keyword>
<keyword id="KW-0949">S-adenosyl-L-methionine</keyword>
<gene>
    <name evidence="1" type="primary">cofG</name>
    <name type="ordered locus">Memar_1838</name>
</gene>
<dbReference type="EC" id="4.3.1.32" evidence="1"/>
<dbReference type="EMBL" id="CP000562">
    <property type="protein sequence ID" value="ABN57764.1"/>
    <property type="molecule type" value="Genomic_DNA"/>
</dbReference>
<dbReference type="RefSeq" id="WP_011844673.1">
    <property type="nucleotide sequence ID" value="NC_009051.1"/>
</dbReference>
<dbReference type="STRING" id="368407.Memar_1838"/>
<dbReference type="GeneID" id="4847531"/>
<dbReference type="GeneID" id="76729914"/>
<dbReference type="KEGG" id="mem:Memar_1838"/>
<dbReference type="eggNOG" id="arCOG00657">
    <property type="taxonomic scope" value="Archaea"/>
</dbReference>
<dbReference type="HOGENOM" id="CLU_054174_0_0_2"/>
<dbReference type="OrthoDB" id="35347at2157"/>
<dbReference type="UniPathway" id="UPA00072"/>
<dbReference type="Proteomes" id="UP000002146">
    <property type="component" value="Chromosome"/>
</dbReference>
<dbReference type="GO" id="GO:0051539">
    <property type="term" value="F:4 iron, 4 sulfur cluster binding"/>
    <property type="evidence" value="ECO:0007669"/>
    <property type="project" value="UniProtKB-KW"/>
</dbReference>
<dbReference type="GO" id="GO:0044689">
    <property type="term" value="F:7,8-didemethyl-8-hydroxy-5-deazariboflavin synthase activity"/>
    <property type="evidence" value="ECO:0007669"/>
    <property type="project" value="UniProtKB-EC"/>
</dbReference>
<dbReference type="GO" id="GO:0005506">
    <property type="term" value="F:iron ion binding"/>
    <property type="evidence" value="ECO:0007669"/>
    <property type="project" value="UniProtKB-UniRule"/>
</dbReference>
<dbReference type="GO" id="GO:0016765">
    <property type="term" value="F:transferase activity, transferring alkyl or aryl (other than methyl) groups"/>
    <property type="evidence" value="ECO:0007669"/>
    <property type="project" value="InterPro"/>
</dbReference>
<dbReference type="CDD" id="cd01335">
    <property type="entry name" value="Radical_SAM"/>
    <property type="match status" value="1"/>
</dbReference>
<dbReference type="Gene3D" id="3.20.20.70">
    <property type="entry name" value="Aldolase class I"/>
    <property type="match status" value="1"/>
</dbReference>
<dbReference type="HAMAP" id="MF_01611">
    <property type="entry name" value="FO_synth_sub1"/>
    <property type="match status" value="1"/>
</dbReference>
<dbReference type="InterPro" id="IPR013785">
    <property type="entry name" value="Aldolase_TIM"/>
</dbReference>
<dbReference type="InterPro" id="IPR019939">
    <property type="entry name" value="CofG_family"/>
</dbReference>
<dbReference type="InterPro" id="IPR006638">
    <property type="entry name" value="Elp3/MiaA/NifB-like_rSAM"/>
</dbReference>
<dbReference type="InterPro" id="IPR034405">
    <property type="entry name" value="F420"/>
</dbReference>
<dbReference type="InterPro" id="IPR007197">
    <property type="entry name" value="rSAM"/>
</dbReference>
<dbReference type="NCBIfam" id="TIGR03550">
    <property type="entry name" value="F420_cofG"/>
    <property type="match status" value="1"/>
</dbReference>
<dbReference type="NCBIfam" id="NF004884">
    <property type="entry name" value="PRK06245.1"/>
    <property type="match status" value="1"/>
</dbReference>
<dbReference type="PANTHER" id="PTHR43076:SF15">
    <property type="entry name" value="7,8-DIDEMETHYL-8-HYDROXY-5-DEAZARIBOFLAVIN SYNTHASE"/>
    <property type="match status" value="1"/>
</dbReference>
<dbReference type="PANTHER" id="PTHR43076">
    <property type="entry name" value="FO SYNTHASE (COFH)"/>
    <property type="match status" value="1"/>
</dbReference>
<dbReference type="Pfam" id="PF04055">
    <property type="entry name" value="Radical_SAM"/>
    <property type="match status" value="1"/>
</dbReference>
<dbReference type="SFLD" id="SFLDF00294">
    <property type="entry name" value="7_8-didemethyl-8-hydroxy-5-dea"/>
    <property type="match status" value="1"/>
</dbReference>
<dbReference type="SFLD" id="SFLDS00029">
    <property type="entry name" value="Radical_SAM"/>
    <property type="match status" value="1"/>
</dbReference>
<dbReference type="SMART" id="SM00729">
    <property type="entry name" value="Elp3"/>
    <property type="match status" value="1"/>
</dbReference>
<dbReference type="SUPFAM" id="SSF102114">
    <property type="entry name" value="Radical SAM enzymes"/>
    <property type="match status" value="1"/>
</dbReference>
<dbReference type="PROSITE" id="PS51918">
    <property type="entry name" value="RADICAL_SAM"/>
    <property type="match status" value="1"/>
</dbReference>
<organism>
    <name type="scientific">Methanoculleus marisnigri (strain ATCC 35101 / DSM 1498 / JR1)</name>
    <dbReference type="NCBI Taxonomy" id="368407"/>
    <lineage>
        <taxon>Archaea</taxon>
        <taxon>Methanobacteriati</taxon>
        <taxon>Methanobacteriota</taxon>
        <taxon>Stenosarchaea group</taxon>
        <taxon>Methanomicrobia</taxon>
        <taxon>Methanomicrobiales</taxon>
        <taxon>Methanomicrobiaceae</taxon>
        <taxon>Methanoculleus</taxon>
    </lineage>
</organism>